<evidence type="ECO:0000250" key="1">
    <source>
        <dbReference type="UniProtKB" id="D4A208"/>
    </source>
</evidence>
<evidence type="ECO:0000250" key="2">
    <source>
        <dbReference type="UniProtKB" id="O75044"/>
    </source>
</evidence>
<evidence type="ECO:0000250" key="3">
    <source>
        <dbReference type="UniProtKB" id="Q91Z67"/>
    </source>
</evidence>
<evidence type="ECO:0000255" key="4"/>
<evidence type="ECO:0000255" key="5">
    <source>
        <dbReference type="PROSITE-ProRule" id="PRU00172"/>
    </source>
</evidence>
<evidence type="ECO:0000255" key="6">
    <source>
        <dbReference type="PROSITE-ProRule" id="PRU00192"/>
    </source>
</evidence>
<evidence type="ECO:0000255" key="7">
    <source>
        <dbReference type="PROSITE-ProRule" id="PRU01077"/>
    </source>
</evidence>
<evidence type="ECO:0000256" key="8">
    <source>
        <dbReference type="SAM" id="MobiDB-lite"/>
    </source>
</evidence>
<evidence type="ECO:0000305" key="9"/>
<accession>B0S6J3</accession>
<accession>Q0IHZ9</accession>
<proteinExistence type="evidence at transcript level"/>
<dbReference type="EMBL" id="BX537291">
    <property type="protein sequence ID" value="CAQ14643.1"/>
    <property type="molecule type" value="Genomic_DNA"/>
</dbReference>
<dbReference type="EMBL" id="CR848745">
    <property type="protein sequence ID" value="CAQ14643.1"/>
    <property type="status" value="JOINED"/>
    <property type="molecule type" value="Genomic_DNA"/>
</dbReference>
<dbReference type="EMBL" id="BC122886">
    <property type="protein sequence ID" value="AAI22887.1"/>
    <property type="molecule type" value="mRNA"/>
</dbReference>
<dbReference type="RefSeq" id="NP_001041700.1">
    <property type="nucleotide sequence ID" value="NM_001048235.1"/>
</dbReference>
<dbReference type="RefSeq" id="XP_009304269.1">
    <property type="nucleotide sequence ID" value="XM_009305994.2"/>
</dbReference>
<dbReference type="SMR" id="B0S6J3"/>
<dbReference type="FunCoup" id="B0S6J3">
    <property type="interactions" value="670"/>
</dbReference>
<dbReference type="STRING" id="7955.ENSDARP00000045390"/>
<dbReference type="PaxDb" id="7955-ENSDARP00000045390"/>
<dbReference type="PeptideAtlas" id="B0S6J3"/>
<dbReference type="Ensembl" id="ENSDART00000045391">
    <property type="protein sequence ID" value="ENSDARP00000045390"/>
    <property type="gene ID" value="ENSDARG00000032161"/>
</dbReference>
<dbReference type="Ensembl" id="ENSDART00000190095">
    <property type="protein sequence ID" value="ENSDARP00000155791"/>
    <property type="gene ID" value="ENSDARG00000032161"/>
</dbReference>
<dbReference type="GeneID" id="556198"/>
<dbReference type="KEGG" id="dre:556198"/>
<dbReference type="AGR" id="ZFIN:ZDB-GENE-060915-2"/>
<dbReference type="CTD" id="23380"/>
<dbReference type="ZFIN" id="ZDB-GENE-060915-2">
    <property type="gene designation" value="srgap2"/>
</dbReference>
<dbReference type="eggNOG" id="KOG3565">
    <property type="taxonomic scope" value="Eukaryota"/>
</dbReference>
<dbReference type="HOGENOM" id="CLU_005715_0_0_1"/>
<dbReference type="InParanoid" id="B0S6J3"/>
<dbReference type="OrthoDB" id="5981864at2759"/>
<dbReference type="PhylomeDB" id="B0S6J3"/>
<dbReference type="TreeFam" id="TF315892"/>
<dbReference type="Reactome" id="R-DRE-5663220">
    <property type="pathway name" value="RHO GTPases Activate Formins"/>
</dbReference>
<dbReference type="Reactome" id="R-DRE-9013148">
    <property type="pathway name" value="CDC42 GTPase cycle"/>
</dbReference>
<dbReference type="Reactome" id="R-DRE-9013149">
    <property type="pathway name" value="RAC1 GTPase cycle"/>
</dbReference>
<dbReference type="Reactome" id="R-DRE-9013406">
    <property type="pathway name" value="RHOQ GTPase cycle"/>
</dbReference>
<dbReference type="Reactome" id="R-DRE-9013420">
    <property type="pathway name" value="RHOU GTPase cycle"/>
</dbReference>
<dbReference type="Reactome" id="R-DRE-9013423">
    <property type="pathway name" value="RAC3 GTPase cycle"/>
</dbReference>
<dbReference type="Reactome" id="R-DRE-9035034">
    <property type="pathway name" value="RHOF GTPase cycle"/>
</dbReference>
<dbReference type="PRO" id="PR:B0S6J3"/>
<dbReference type="Proteomes" id="UP000000437">
    <property type="component" value="Alternate scaffold 11"/>
</dbReference>
<dbReference type="Proteomes" id="UP000000437">
    <property type="component" value="Chromosome 11"/>
</dbReference>
<dbReference type="Bgee" id="ENSDARG00000032161">
    <property type="expression patterns" value="Expressed in zone of skin and 21 other cell types or tissues"/>
</dbReference>
<dbReference type="ExpressionAtlas" id="B0S6J3">
    <property type="expression patterns" value="baseline and differential"/>
</dbReference>
<dbReference type="GO" id="GO:0005737">
    <property type="term" value="C:cytoplasm"/>
    <property type="evidence" value="ECO:0000318"/>
    <property type="project" value="GO_Central"/>
</dbReference>
<dbReference type="GO" id="GO:0005829">
    <property type="term" value="C:cytosol"/>
    <property type="evidence" value="ECO:0000250"/>
    <property type="project" value="UniProtKB"/>
</dbReference>
<dbReference type="GO" id="GO:0044327">
    <property type="term" value="C:dendritic spine head"/>
    <property type="evidence" value="ECO:0000250"/>
    <property type="project" value="UniProtKB"/>
</dbReference>
<dbReference type="GO" id="GO:0030027">
    <property type="term" value="C:lamellipodium"/>
    <property type="evidence" value="ECO:0007669"/>
    <property type="project" value="UniProtKB-SubCell"/>
</dbReference>
<dbReference type="GO" id="GO:0005634">
    <property type="term" value="C:nucleus"/>
    <property type="evidence" value="ECO:0007669"/>
    <property type="project" value="UniProtKB-SubCell"/>
</dbReference>
<dbReference type="GO" id="GO:0045335">
    <property type="term" value="C:phagocytic vesicle"/>
    <property type="evidence" value="ECO:0000250"/>
    <property type="project" value="UniProtKB"/>
</dbReference>
<dbReference type="GO" id="GO:0005886">
    <property type="term" value="C:plasma membrane"/>
    <property type="evidence" value="ECO:0000250"/>
    <property type="project" value="UniProtKB"/>
</dbReference>
<dbReference type="GO" id="GO:0014069">
    <property type="term" value="C:postsynaptic density"/>
    <property type="evidence" value="ECO:0000250"/>
    <property type="project" value="UniProtKB"/>
</dbReference>
<dbReference type="GO" id="GO:0045211">
    <property type="term" value="C:postsynaptic membrane"/>
    <property type="evidence" value="ECO:0000250"/>
    <property type="project" value="UniProtKB"/>
</dbReference>
<dbReference type="GO" id="GO:0005096">
    <property type="term" value="F:GTPase activator activity"/>
    <property type="evidence" value="ECO:0000250"/>
    <property type="project" value="UniProtKB"/>
</dbReference>
<dbReference type="GO" id="GO:0042803">
    <property type="term" value="F:protein homodimerization activity"/>
    <property type="evidence" value="ECO:0000250"/>
    <property type="project" value="UniProtKB"/>
</dbReference>
<dbReference type="GO" id="GO:0031267">
    <property type="term" value="F:small GTPase binding"/>
    <property type="evidence" value="ECO:0000250"/>
    <property type="project" value="UniProtKB"/>
</dbReference>
<dbReference type="GO" id="GO:0051014">
    <property type="term" value="P:actin filament severing"/>
    <property type="evidence" value="ECO:0000250"/>
    <property type="project" value="UniProtKB"/>
</dbReference>
<dbReference type="GO" id="GO:0060996">
    <property type="term" value="P:dendritic spine development"/>
    <property type="evidence" value="ECO:0000250"/>
    <property type="project" value="UniProtKB"/>
</dbReference>
<dbReference type="GO" id="GO:0046847">
    <property type="term" value="P:filopodium assembly"/>
    <property type="evidence" value="ECO:0000250"/>
    <property type="project" value="UniProtKB"/>
</dbReference>
<dbReference type="GO" id="GO:0030336">
    <property type="term" value="P:negative regulation of cell migration"/>
    <property type="evidence" value="ECO:0000318"/>
    <property type="project" value="GO_Central"/>
</dbReference>
<dbReference type="GO" id="GO:2001223">
    <property type="term" value="P:negative regulation of neuron migration"/>
    <property type="evidence" value="ECO:0000250"/>
    <property type="project" value="UniProtKB"/>
</dbReference>
<dbReference type="GO" id="GO:0048812">
    <property type="term" value="P:neuron projection morphogenesis"/>
    <property type="evidence" value="ECO:0000250"/>
    <property type="project" value="UniProtKB"/>
</dbReference>
<dbReference type="GO" id="GO:0072015">
    <property type="term" value="P:podocyte development"/>
    <property type="evidence" value="ECO:0000315"/>
    <property type="project" value="ZFIN"/>
</dbReference>
<dbReference type="GO" id="GO:0043547">
    <property type="term" value="P:positive regulation of GTPase activity"/>
    <property type="evidence" value="ECO:0000250"/>
    <property type="project" value="UniProtKB"/>
</dbReference>
<dbReference type="GO" id="GO:0030334">
    <property type="term" value="P:regulation of cell migration"/>
    <property type="evidence" value="ECO:0000250"/>
    <property type="project" value="UniProtKB"/>
</dbReference>
<dbReference type="GO" id="GO:0007165">
    <property type="term" value="P:signal transduction"/>
    <property type="evidence" value="ECO:0007669"/>
    <property type="project" value="InterPro"/>
</dbReference>
<dbReference type="CDD" id="cd07682">
    <property type="entry name" value="F-BAR_srGAP2"/>
    <property type="match status" value="1"/>
</dbReference>
<dbReference type="CDD" id="cd04383">
    <property type="entry name" value="RhoGAP_srGAP"/>
    <property type="match status" value="1"/>
</dbReference>
<dbReference type="CDD" id="cd11955">
    <property type="entry name" value="SH3_srGAP1-3"/>
    <property type="match status" value="1"/>
</dbReference>
<dbReference type="FunFam" id="1.10.555.10:FF:000010">
    <property type="entry name" value="SLIT-ROBO Rho GTPase-activating protein 1 isoform 2"/>
    <property type="match status" value="1"/>
</dbReference>
<dbReference type="FunFam" id="1.20.1270.60:FF:000006">
    <property type="entry name" value="SLIT-ROBO Rho GTPase-activating protein 1 isoform 2"/>
    <property type="match status" value="1"/>
</dbReference>
<dbReference type="FunFam" id="2.30.30.40:FF:000266">
    <property type="entry name" value="SLIT-ROBO Rho GTPase-activating protein 2"/>
    <property type="match status" value="1"/>
</dbReference>
<dbReference type="Gene3D" id="1.20.1270.60">
    <property type="entry name" value="Arfaptin homology (AH) domain/BAR domain"/>
    <property type="match status" value="1"/>
</dbReference>
<dbReference type="Gene3D" id="1.10.555.10">
    <property type="entry name" value="Rho GTPase activation protein"/>
    <property type="match status" value="1"/>
</dbReference>
<dbReference type="Gene3D" id="2.30.30.40">
    <property type="entry name" value="SH3 Domains"/>
    <property type="match status" value="1"/>
</dbReference>
<dbReference type="InterPro" id="IPR027267">
    <property type="entry name" value="AH/BAR_dom_sf"/>
</dbReference>
<dbReference type="InterPro" id="IPR031160">
    <property type="entry name" value="F_BAR"/>
</dbReference>
<dbReference type="InterPro" id="IPR001060">
    <property type="entry name" value="FCH_dom"/>
</dbReference>
<dbReference type="InterPro" id="IPR008936">
    <property type="entry name" value="Rho_GTPase_activation_prot"/>
</dbReference>
<dbReference type="InterPro" id="IPR000198">
    <property type="entry name" value="RhoGAP_dom"/>
</dbReference>
<dbReference type="InterPro" id="IPR036028">
    <property type="entry name" value="SH3-like_dom_sf"/>
</dbReference>
<dbReference type="InterPro" id="IPR001452">
    <property type="entry name" value="SH3_domain"/>
</dbReference>
<dbReference type="InterPro" id="IPR051627">
    <property type="entry name" value="SLIT-ROBO_RhoGAP"/>
</dbReference>
<dbReference type="InterPro" id="IPR035648">
    <property type="entry name" value="srGAP1/2/3_SH3"/>
</dbReference>
<dbReference type="PANTHER" id="PTHR14166">
    <property type="entry name" value="SLIT-ROBO RHO GTPASE ACTIVATING PROTEIN"/>
    <property type="match status" value="1"/>
</dbReference>
<dbReference type="Pfam" id="PF00611">
    <property type="entry name" value="FCH"/>
    <property type="match status" value="1"/>
</dbReference>
<dbReference type="Pfam" id="PF00620">
    <property type="entry name" value="RhoGAP"/>
    <property type="match status" value="1"/>
</dbReference>
<dbReference type="Pfam" id="PF00018">
    <property type="entry name" value="SH3_1"/>
    <property type="match status" value="1"/>
</dbReference>
<dbReference type="SMART" id="SM00055">
    <property type="entry name" value="FCH"/>
    <property type="match status" value="1"/>
</dbReference>
<dbReference type="SMART" id="SM00324">
    <property type="entry name" value="RhoGAP"/>
    <property type="match status" value="1"/>
</dbReference>
<dbReference type="SMART" id="SM00326">
    <property type="entry name" value="SH3"/>
    <property type="match status" value="1"/>
</dbReference>
<dbReference type="SUPFAM" id="SSF103657">
    <property type="entry name" value="BAR/IMD domain-like"/>
    <property type="match status" value="1"/>
</dbReference>
<dbReference type="SUPFAM" id="SSF48350">
    <property type="entry name" value="GTPase activation domain, GAP"/>
    <property type="match status" value="1"/>
</dbReference>
<dbReference type="SUPFAM" id="SSF50044">
    <property type="entry name" value="SH3-domain"/>
    <property type="match status" value="1"/>
</dbReference>
<dbReference type="PROSITE" id="PS51741">
    <property type="entry name" value="F_BAR"/>
    <property type="match status" value="1"/>
</dbReference>
<dbReference type="PROSITE" id="PS50238">
    <property type="entry name" value="RHOGAP"/>
    <property type="match status" value="1"/>
</dbReference>
<dbReference type="PROSITE" id="PS50002">
    <property type="entry name" value="SH3"/>
    <property type="match status" value="1"/>
</dbReference>
<organism>
    <name type="scientific">Danio rerio</name>
    <name type="common">Zebrafish</name>
    <name type="synonym">Brachydanio rerio</name>
    <dbReference type="NCBI Taxonomy" id="7955"/>
    <lineage>
        <taxon>Eukaryota</taxon>
        <taxon>Metazoa</taxon>
        <taxon>Chordata</taxon>
        <taxon>Craniata</taxon>
        <taxon>Vertebrata</taxon>
        <taxon>Euteleostomi</taxon>
        <taxon>Actinopterygii</taxon>
        <taxon>Neopterygii</taxon>
        <taxon>Teleostei</taxon>
        <taxon>Ostariophysi</taxon>
        <taxon>Cypriniformes</taxon>
        <taxon>Danionidae</taxon>
        <taxon>Danioninae</taxon>
        <taxon>Danio</taxon>
    </lineage>
</organism>
<feature type="chain" id="PRO_0000418883" description="SLIT-ROBO Rho GTPase-activating protein 2">
    <location>
        <begin position="1"/>
        <end position="1100"/>
    </location>
</feature>
<feature type="domain" description="F-BAR" evidence="7">
    <location>
        <begin position="19"/>
        <end position="324"/>
    </location>
</feature>
<feature type="domain" description="Rho-GAP" evidence="5">
    <location>
        <begin position="496"/>
        <end position="680"/>
    </location>
</feature>
<feature type="domain" description="SH3" evidence="6">
    <location>
        <begin position="738"/>
        <end position="797"/>
    </location>
</feature>
<feature type="region of interest" description="Disordered" evidence="8">
    <location>
        <begin position="181"/>
        <end position="210"/>
    </location>
</feature>
<feature type="region of interest" description="Disordered" evidence="8">
    <location>
        <begin position="800"/>
        <end position="835"/>
    </location>
</feature>
<feature type="region of interest" description="Disordered" evidence="8">
    <location>
        <begin position="852"/>
        <end position="938"/>
    </location>
</feature>
<feature type="region of interest" description="Disordered" evidence="8">
    <location>
        <begin position="986"/>
        <end position="1100"/>
    </location>
</feature>
<feature type="coiled-coil region" evidence="4">
    <location>
        <begin position="170"/>
        <end position="201"/>
    </location>
</feature>
<feature type="coiled-coil region" evidence="4">
    <location>
        <begin position="363"/>
        <end position="400"/>
    </location>
</feature>
<feature type="coiled-coil region" evidence="4">
    <location>
        <begin position="945"/>
        <end position="972"/>
    </location>
</feature>
<feature type="compositionally biased region" description="Basic and acidic residues" evidence="8">
    <location>
        <begin position="181"/>
        <end position="203"/>
    </location>
</feature>
<feature type="compositionally biased region" description="Basic and acidic residues" evidence="8">
    <location>
        <begin position="807"/>
        <end position="823"/>
    </location>
</feature>
<feature type="compositionally biased region" description="Polar residues" evidence="8">
    <location>
        <begin position="919"/>
        <end position="932"/>
    </location>
</feature>
<feature type="compositionally biased region" description="Polar residues" evidence="8">
    <location>
        <begin position="987"/>
        <end position="997"/>
    </location>
</feature>
<feature type="compositionally biased region" description="Polar residues" evidence="8">
    <location>
        <begin position="1008"/>
        <end position="1049"/>
    </location>
</feature>
<feature type="compositionally biased region" description="Low complexity" evidence="8">
    <location>
        <begin position="1067"/>
        <end position="1081"/>
    </location>
</feature>
<feature type="compositionally biased region" description="Pro residues" evidence="8">
    <location>
        <begin position="1082"/>
        <end position="1094"/>
    </location>
</feature>
<feature type="site" description="Arginine finger; crucial for GTP hydrolysis by stabilizing the transition state" evidence="5">
    <location>
        <position position="528"/>
    </location>
</feature>
<feature type="sequence conflict" description="In Ref. 2; AAI22887." evidence="9" ref="2">
    <original>E</original>
    <variation>K</variation>
    <location>
        <position position="317"/>
    </location>
</feature>
<keyword id="KW-1003">Cell membrane</keyword>
<keyword id="KW-0966">Cell projection</keyword>
<keyword id="KW-0175">Coiled coil</keyword>
<keyword id="KW-0963">Cytoplasm</keyword>
<keyword id="KW-0968">Cytoplasmic vesicle</keyword>
<keyword id="KW-0343">GTPase activation</keyword>
<keyword id="KW-0472">Membrane</keyword>
<keyword id="KW-0524">Neurogenesis</keyword>
<keyword id="KW-0539">Nucleus</keyword>
<keyword id="KW-0628">Postsynaptic cell membrane</keyword>
<keyword id="KW-1185">Reference proteome</keyword>
<keyword id="KW-0728">SH3 domain</keyword>
<keyword id="KW-0770">Synapse</keyword>
<reference key="1">
    <citation type="journal article" date="2013" name="Nature">
        <title>The zebrafish reference genome sequence and its relationship to the human genome.</title>
        <authorList>
            <person name="Howe K."/>
            <person name="Clark M.D."/>
            <person name="Torroja C.F."/>
            <person name="Torrance J."/>
            <person name="Berthelot C."/>
            <person name="Muffato M."/>
            <person name="Collins J.E."/>
            <person name="Humphray S."/>
            <person name="McLaren K."/>
            <person name="Matthews L."/>
            <person name="McLaren S."/>
            <person name="Sealy I."/>
            <person name="Caccamo M."/>
            <person name="Churcher C."/>
            <person name="Scott C."/>
            <person name="Barrett J.C."/>
            <person name="Koch R."/>
            <person name="Rauch G.J."/>
            <person name="White S."/>
            <person name="Chow W."/>
            <person name="Kilian B."/>
            <person name="Quintais L.T."/>
            <person name="Guerra-Assuncao J.A."/>
            <person name="Zhou Y."/>
            <person name="Gu Y."/>
            <person name="Yen J."/>
            <person name="Vogel J.H."/>
            <person name="Eyre T."/>
            <person name="Redmond S."/>
            <person name="Banerjee R."/>
            <person name="Chi J."/>
            <person name="Fu B."/>
            <person name="Langley E."/>
            <person name="Maguire S.F."/>
            <person name="Laird G.K."/>
            <person name="Lloyd D."/>
            <person name="Kenyon E."/>
            <person name="Donaldson S."/>
            <person name="Sehra H."/>
            <person name="Almeida-King J."/>
            <person name="Loveland J."/>
            <person name="Trevanion S."/>
            <person name="Jones M."/>
            <person name="Quail M."/>
            <person name="Willey D."/>
            <person name="Hunt A."/>
            <person name="Burton J."/>
            <person name="Sims S."/>
            <person name="McLay K."/>
            <person name="Plumb B."/>
            <person name="Davis J."/>
            <person name="Clee C."/>
            <person name="Oliver K."/>
            <person name="Clark R."/>
            <person name="Riddle C."/>
            <person name="Elliot D."/>
            <person name="Threadgold G."/>
            <person name="Harden G."/>
            <person name="Ware D."/>
            <person name="Begum S."/>
            <person name="Mortimore B."/>
            <person name="Kerry G."/>
            <person name="Heath P."/>
            <person name="Phillimore B."/>
            <person name="Tracey A."/>
            <person name="Corby N."/>
            <person name="Dunn M."/>
            <person name="Johnson C."/>
            <person name="Wood J."/>
            <person name="Clark S."/>
            <person name="Pelan S."/>
            <person name="Griffiths G."/>
            <person name="Smith M."/>
            <person name="Glithero R."/>
            <person name="Howden P."/>
            <person name="Barker N."/>
            <person name="Lloyd C."/>
            <person name="Stevens C."/>
            <person name="Harley J."/>
            <person name="Holt K."/>
            <person name="Panagiotidis G."/>
            <person name="Lovell J."/>
            <person name="Beasley H."/>
            <person name="Henderson C."/>
            <person name="Gordon D."/>
            <person name="Auger K."/>
            <person name="Wright D."/>
            <person name="Collins J."/>
            <person name="Raisen C."/>
            <person name="Dyer L."/>
            <person name="Leung K."/>
            <person name="Robertson L."/>
            <person name="Ambridge K."/>
            <person name="Leongamornlert D."/>
            <person name="McGuire S."/>
            <person name="Gilderthorp R."/>
            <person name="Griffiths C."/>
            <person name="Manthravadi D."/>
            <person name="Nichol S."/>
            <person name="Barker G."/>
            <person name="Whitehead S."/>
            <person name="Kay M."/>
            <person name="Brown J."/>
            <person name="Murnane C."/>
            <person name="Gray E."/>
            <person name="Humphries M."/>
            <person name="Sycamore N."/>
            <person name="Barker D."/>
            <person name="Saunders D."/>
            <person name="Wallis J."/>
            <person name="Babbage A."/>
            <person name="Hammond S."/>
            <person name="Mashreghi-Mohammadi M."/>
            <person name="Barr L."/>
            <person name="Martin S."/>
            <person name="Wray P."/>
            <person name="Ellington A."/>
            <person name="Matthews N."/>
            <person name="Ellwood M."/>
            <person name="Woodmansey R."/>
            <person name="Clark G."/>
            <person name="Cooper J."/>
            <person name="Tromans A."/>
            <person name="Grafham D."/>
            <person name="Skuce C."/>
            <person name="Pandian R."/>
            <person name="Andrews R."/>
            <person name="Harrison E."/>
            <person name="Kimberley A."/>
            <person name="Garnett J."/>
            <person name="Fosker N."/>
            <person name="Hall R."/>
            <person name="Garner P."/>
            <person name="Kelly D."/>
            <person name="Bird C."/>
            <person name="Palmer S."/>
            <person name="Gehring I."/>
            <person name="Berger A."/>
            <person name="Dooley C.M."/>
            <person name="Ersan-Urun Z."/>
            <person name="Eser C."/>
            <person name="Geiger H."/>
            <person name="Geisler M."/>
            <person name="Karotki L."/>
            <person name="Kirn A."/>
            <person name="Konantz J."/>
            <person name="Konantz M."/>
            <person name="Oberlander M."/>
            <person name="Rudolph-Geiger S."/>
            <person name="Teucke M."/>
            <person name="Lanz C."/>
            <person name="Raddatz G."/>
            <person name="Osoegawa K."/>
            <person name="Zhu B."/>
            <person name="Rapp A."/>
            <person name="Widaa S."/>
            <person name="Langford C."/>
            <person name="Yang F."/>
            <person name="Schuster S.C."/>
            <person name="Carter N.P."/>
            <person name="Harrow J."/>
            <person name="Ning Z."/>
            <person name="Herrero J."/>
            <person name="Searle S.M."/>
            <person name="Enright A."/>
            <person name="Geisler R."/>
            <person name="Plasterk R.H."/>
            <person name="Lee C."/>
            <person name="Westerfield M."/>
            <person name="de Jong P.J."/>
            <person name="Zon L.I."/>
            <person name="Postlethwait J.H."/>
            <person name="Nusslein-Volhard C."/>
            <person name="Hubbard T.J."/>
            <person name="Roest Crollius H."/>
            <person name="Rogers J."/>
            <person name="Stemple D.L."/>
        </authorList>
    </citation>
    <scope>NUCLEOTIDE SEQUENCE [LARGE SCALE GENOMIC DNA]</scope>
    <source>
        <strain>Tuebingen</strain>
    </source>
</reference>
<reference key="2">
    <citation type="submission" date="2006-09" db="EMBL/GenBank/DDBJ databases">
        <authorList>
            <consortium name="NIH - Zebrafish Gene Collection (ZGC) project"/>
        </authorList>
    </citation>
    <scope>NUCLEOTIDE SEQUENCE [LARGE SCALE MRNA]</scope>
</reference>
<sequence>MTSPAKFRKDKEIIAEYETQVKEIRAQLVEQLKCLDQQCELRVQLLQDLQDFFRKKAEIEMDYSRNLEKLAERFLAKTRYTKDPQFKKEQNILSPVNCWNLLLAQVKRESRDHATLSDLYLNNIIPRFAQISEDSGRLFKKSKEVGLQLQEDLMKVLNELYTVMKTYHMYNMDSINAESKLKEAEKQEEKQMSRSVRHEEKQTPRSPDSLTNIKIEDKHVRRSSVKKIEKMKEKRQAKYTENKLKAIKARNEYLLALEATNSCVFKYYIHDLSDLIDCCDLGYHASLNRALRTYLSAEFNVETSKHGGLETIENAAENLEANSDKQRLMETYNNVFCPPMRFDFQSHMGDMVGHLCAQQPVQGELIQRCQQLQSRLSTLNIENEEVKKTMEATLQTIQDMVTIEDFDVTDCFHHSNSMESVKSTVSESFMSKPSLAKRRANQQETEQFYFTKLKEFLEGRNLITKLQAKHDLIQKTLGESQKTDYCLASGRRDSTVRKQEAIQIIPLMVESCIRFISRHGLHHEGIFRVSGSQVEVNDIKNAFERGEDPLAGDQNDHDMDSIAGVLKLYFRGLENALFPKEVFHDLMSCVSIESLQERAVHIRKVLLSLPSNILVIMRYLFAFLNHLSQYSDDNMMDPYNLAICFGPTLMSVPEGHDQVSCQAHVNELIKTIIIHHESIFPGPRELEGPVYDRGGAPEEYCDSPHIEPPLVDEPAPDTVSVIHNSDDVKSGPLTVSESDPIEAIARFDYSGRTNRELSFKKGASLLLYSRASDDWWEGRHNGTEGLVPHQYIVVQDMPDGYAGRGSPKADLEGSHDSVEEKVSTRASASSPTGGHVADIYLANLNKLRKRPEATSIRRTIRPVEEGSSGAAGGLKTSSMPAGGLAKDSSDKRPVSAHSVLNSITRHSSLKTKVEGPQVRKSTPTGRSKSFSNHRPLDPEVIAQVEHSSQDIEATMNTALSELRELERQSNVKHAPDVVLDTLEQLKSGGTSEPSSPLHSRLLREAESSQHPLQRSASSASDMPSTFRPSKTTGPKSPLSSMTTASGSTFRDNKPPATRPKPVVFPKSSSAGGSPAMGSPTTTIPPTPPPPPPPTDKSCPV</sequence>
<name>SRGP2_DANRE</name>
<protein>
    <recommendedName>
        <fullName>SLIT-ROBO Rho GTPase-activating protein 2</fullName>
        <shortName>srGAP2</shortName>
    </recommendedName>
</protein>
<comment type="function">
    <text evidence="3">Postsynaptic RAC1 GTPase activating protein (GAP) that plays a key role in neuronal morphogenesis and migration mainly during development of the cerebral cortex. Regulates excitatory and inhibitory synapse maturation and density in cortical pyramidal neurons. Mechanistically, acts by binding and deforming membranes, thereby regulating actin dynamics to regulate cell migration and differentiation.</text>
</comment>
<comment type="subcellular location">
    <subcellularLocation>
        <location evidence="3">Cell membrane</location>
    </subcellularLocation>
    <subcellularLocation>
        <location evidence="3">Cell projection</location>
        <location evidence="3">Dendritic spine</location>
    </subcellularLocation>
    <subcellularLocation>
        <location evidence="3">Postsynaptic density</location>
    </subcellularLocation>
    <subcellularLocation>
        <location evidence="3">Postsynaptic cell membrane</location>
    </subcellularLocation>
    <subcellularLocation>
        <location evidence="2">Cell projection</location>
        <location evidence="2">Lamellipodium</location>
    </subcellularLocation>
    <subcellularLocation>
        <location evidence="3">Cytoplasmic vesicle</location>
        <location evidence="3">Phagosome</location>
    </subcellularLocation>
    <subcellularLocation>
        <location evidence="1">Nucleus</location>
    </subcellularLocation>
    <subcellularLocation>
        <location evidence="3">Cytoplasm</location>
        <location evidence="3">Cytosol</location>
    </subcellularLocation>
</comment>
<comment type="domain">
    <text evidence="2">The F-BAR domain mediates oligomerization, binds membranes, and induces plasma membrane protrusions.</text>
</comment>
<gene>
    <name type="primary">srgap2</name>
    <name type="ORF">si:dkey-85p17.1</name>
</gene>